<reference key="1">
    <citation type="submission" date="2008-10" db="EMBL/GenBank/DDBJ databases">
        <title>The complete genome sequence of Helicobacter pylori strain P12.</title>
        <authorList>
            <person name="Fischer W."/>
            <person name="Windhager L."/>
            <person name="Karnholz A."/>
            <person name="Zeiller M."/>
            <person name="Zimmer R."/>
            <person name="Haas R."/>
        </authorList>
    </citation>
    <scope>NUCLEOTIDE SEQUENCE [LARGE SCALE GENOMIC DNA]</scope>
    <source>
        <strain>P12</strain>
    </source>
</reference>
<protein>
    <recommendedName>
        <fullName evidence="1">Acyl carrier protein</fullName>
        <shortName evidence="1">ACP</shortName>
    </recommendedName>
</protein>
<keyword id="KW-0002">3D-structure</keyword>
<keyword id="KW-0963">Cytoplasm</keyword>
<keyword id="KW-0275">Fatty acid biosynthesis</keyword>
<keyword id="KW-0276">Fatty acid metabolism</keyword>
<keyword id="KW-0444">Lipid biosynthesis</keyword>
<keyword id="KW-0443">Lipid metabolism</keyword>
<keyword id="KW-0596">Phosphopantetheine</keyword>
<keyword id="KW-0597">Phosphoprotein</keyword>
<sequence>MALFEDIQAVIAEQLNVDAAQVTPEAEFVKDLGADSLDVVELIMALEEKFGIEIPDEQAEKIVNVGDVVKYIEDNKLA</sequence>
<comment type="function">
    <text evidence="1">Carrier of the growing fatty acid chain in fatty acid biosynthesis.</text>
</comment>
<comment type="pathway">
    <text evidence="1">Lipid metabolism; fatty acid biosynthesis.</text>
</comment>
<comment type="subcellular location">
    <subcellularLocation>
        <location evidence="1">Cytoplasm</location>
    </subcellularLocation>
</comment>
<comment type="PTM">
    <text evidence="1">4'-phosphopantetheine is transferred from CoA to a specific serine of apo-ACP by AcpS. This modification is essential for activity because fatty acids are bound in thioester linkage to the sulfhydryl of the prosthetic group.</text>
</comment>
<comment type="similarity">
    <text evidence="1">Belongs to the acyl carrier protein (ACP) family.</text>
</comment>
<gene>
    <name evidence="1" type="primary">acpP</name>
    <name type="ordered locus">HPP12_0566</name>
</gene>
<evidence type="ECO:0000255" key="1">
    <source>
        <dbReference type="HAMAP-Rule" id="MF_01217"/>
    </source>
</evidence>
<evidence type="ECO:0000255" key="2">
    <source>
        <dbReference type="PROSITE-ProRule" id="PRU00258"/>
    </source>
</evidence>
<evidence type="ECO:0007829" key="3">
    <source>
        <dbReference type="PDB" id="8Z5F"/>
    </source>
</evidence>
<organism>
    <name type="scientific">Helicobacter pylori (strain P12)</name>
    <dbReference type="NCBI Taxonomy" id="570508"/>
    <lineage>
        <taxon>Bacteria</taxon>
        <taxon>Pseudomonadati</taxon>
        <taxon>Campylobacterota</taxon>
        <taxon>Epsilonproteobacteria</taxon>
        <taxon>Campylobacterales</taxon>
        <taxon>Helicobacteraceae</taxon>
        <taxon>Helicobacter</taxon>
    </lineage>
</organism>
<proteinExistence type="evidence at protein level"/>
<dbReference type="EMBL" id="CP001217">
    <property type="protein sequence ID" value="ACJ07720.1"/>
    <property type="molecule type" value="Genomic_DNA"/>
</dbReference>
<dbReference type="PDB" id="5H9G">
    <property type="method" value="X-ray"/>
    <property type="resolution" value="2.60 A"/>
    <property type="chains" value="A/B=1-78"/>
</dbReference>
<dbReference type="PDB" id="5H9H">
    <property type="method" value="X-ray"/>
    <property type="resolution" value="2.50 A"/>
    <property type="chains" value="A/B/C=1-78"/>
</dbReference>
<dbReference type="PDB" id="6IHC">
    <property type="method" value="X-ray"/>
    <property type="resolution" value="2.40 A"/>
    <property type="chains" value="G=7-71"/>
</dbReference>
<dbReference type="PDB" id="8Z5D">
    <property type="method" value="X-ray"/>
    <property type="resolution" value="2.50 A"/>
    <property type="chains" value="C/D=1-78"/>
</dbReference>
<dbReference type="PDB" id="8Z5F">
    <property type="method" value="X-ray"/>
    <property type="resolution" value="1.95 A"/>
    <property type="chains" value="C/D=1-78"/>
</dbReference>
<dbReference type="PDBsum" id="5H9G"/>
<dbReference type="PDBsum" id="5H9H"/>
<dbReference type="PDBsum" id="6IHC"/>
<dbReference type="PDBsum" id="8Z5D"/>
<dbReference type="PDBsum" id="8Z5F"/>
<dbReference type="SMR" id="B6JLE2"/>
<dbReference type="KEGG" id="hpp:HPP12_0566"/>
<dbReference type="HOGENOM" id="CLU_108696_5_1_7"/>
<dbReference type="UniPathway" id="UPA00094"/>
<dbReference type="Proteomes" id="UP000008198">
    <property type="component" value="Chromosome"/>
</dbReference>
<dbReference type="GO" id="GO:0005829">
    <property type="term" value="C:cytosol"/>
    <property type="evidence" value="ECO:0007669"/>
    <property type="project" value="TreeGrafter"/>
</dbReference>
<dbReference type="GO" id="GO:0016020">
    <property type="term" value="C:membrane"/>
    <property type="evidence" value="ECO:0007669"/>
    <property type="project" value="GOC"/>
</dbReference>
<dbReference type="GO" id="GO:0000035">
    <property type="term" value="F:acyl binding"/>
    <property type="evidence" value="ECO:0007669"/>
    <property type="project" value="TreeGrafter"/>
</dbReference>
<dbReference type="GO" id="GO:0000036">
    <property type="term" value="F:acyl carrier activity"/>
    <property type="evidence" value="ECO:0007669"/>
    <property type="project" value="UniProtKB-UniRule"/>
</dbReference>
<dbReference type="GO" id="GO:0031177">
    <property type="term" value="F:phosphopantetheine binding"/>
    <property type="evidence" value="ECO:0007669"/>
    <property type="project" value="InterPro"/>
</dbReference>
<dbReference type="GO" id="GO:0009245">
    <property type="term" value="P:lipid A biosynthetic process"/>
    <property type="evidence" value="ECO:0007669"/>
    <property type="project" value="TreeGrafter"/>
</dbReference>
<dbReference type="FunFam" id="1.10.1200.10:FF:000006">
    <property type="entry name" value="Acyl carrier protein"/>
    <property type="match status" value="1"/>
</dbReference>
<dbReference type="Gene3D" id="1.10.1200.10">
    <property type="entry name" value="ACP-like"/>
    <property type="match status" value="1"/>
</dbReference>
<dbReference type="HAMAP" id="MF_01217">
    <property type="entry name" value="Acyl_carrier"/>
    <property type="match status" value="1"/>
</dbReference>
<dbReference type="InterPro" id="IPR003231">
    <property type="entry name" value="ACP"/>
</dbReference>
<dbReference type="InterPro" id="IPR036736">
    <property type="entry name" value="ACP-like_sf"/>
</dbReference>
<dbReference type="InterPro" id="IPR020806">
    <property type="entry name" value="PKS_PP-bd"/>
</dbReference>
<dbReference type="InterPro" id="IPR009081">
    <property type="entry name" value="PP-bd_ACP"/>
</dbReference>
<dbReference type="InterPro" id="IPR006162">
    <property type="entry name" value="Ppantetheine_attach_site"/>
</dbReference>
<dbReference type="NCBIfam" id="TIGR00517">
    <property type="entry name" value="acyl_carrier"/>
    <property type="match status" value="1"/>
</dbReference>
<dbReference type="NCBIfam" id="NF002148">
    <property type="entry name" value="PRK00982.1-2"/>
    <property type="match status" value="1"/>
</dbReference>
<dbReference type="NCBIfam" id="NF002150">
    <property type="entry name" value="PRK00982.1-4"/>
    <property type="match status" value="1"/>
</dbReference>
<dbReference type="NCBIfam" id="NF002151">
    <property type="entry name" value="PRK00982.1-5"/>
    <property type="match status" value="1"/>
</dbReference>
<dbReference type="PANTHER" id="PTHR20863">
    <property type="entry name" value="ACYL CARRIER PROTEIN"/>
    <property type="match status" value="1"/>
</dbReference>
<dbReference type="PANTHER" id="PTHR20863:SF76">
    <property type="entry name" value="CARRIER DOMAIN-CONTAINING PROTEIN"/>
    <property type="match status" value="1"/>
</dbReference>
<dbReference type="Pfam" id="PF00550">
    <property type="entry name" value="PP-binding"/>
    <property type="match status" value="1"/>
</dbReference>
<dbReference type="SMART" id="SM00823">
    <property type="entry name" value="PKS_PP"/>
    <property type="match status" value="1"/>
</dbReference>
<dbReference type="SUPFAM" id="SSF47336">
    <property type="entry name" value="ACP-like"/>
    <property type="match status" value="1"/>
</dbReference>
<dbReference type="PROSITE" id="PS50075">
    <property type="entry name" value="CARRIER"/>
    <property type="match status" value="1"/>
</dbReference>
<dbReference type="PROSITE" id="PS00012">
    <property type="entry name" value="PHOSPHOPANTETHEINE"/>
    <property type="match status" value="1"/>
</dbReference>
<name>ACP_HELP2</name>
<feature type="chain" id="PRO_1000139032" description="Acyl carrier protein">
    <location>
        <begin position="1"/>
        <end position="78"/>
    </location>
</feature>
<feature type="domain" description="Carrier" evidence="2">
    <location>
        <begin position="1"/>
        <end position="76"/>
    </location>
</feature>
<feature type="modified residue" description="O-(pantetheine 4'-phosphoryl)serine" evidence="2">
    <location>
        <position position="36"/>
    </location>
</feature>
<feature type="helix" evidence="3">
    <location>
        <begin position="1"/>
        <end position="15"/>
    </location>
</feature>
<feature type="turn" evidence="3">
    <location>
        <begin position="19"/>
        <end position="21"/>
    </location>
</feature>
<feature type="helix" evidence="3">
    <location>
        <begin position="28"/>
        <end position="31"/>
    </location>
</feature>
<feature type="helix" evidence="3">
    <location>
        <begin position="36"/>
        <end position="49"/>
    </location>
</feature>
<feature type="helix" evidence="3">
    <location>
        <begin position="56"/>
        <end position="60"/>
    </location>
</feature>
<feature type="helix" evidence="3">
    <location>
        <begin position="65"/>
        <end position="74"/>
    </location>
</feature>
<accession>B6JLE2</accession>